<organism>
    <name type="scientific">Ralstonia nicotianae (strain ATCC BAA-1114 / GMI1000)</name>
    <name type="common">Ralstonia solanacearum</name>
    <dbReference type="NCBI Taxonomy" id="267608"/>
    <lineage>
        <taxon>Bacteria</taxon>
        <taxon>Pseudomonadati</taxon>
        <taxon>Pseudomonadota</taxon>
        <taxon>Betaproteobacteria</taxon>
        <taxon>Burkholderiales</taxon>
        <taxon>Burkholderiaceae</taxon>
        <taxon>Ralstonia</taxon>
        <taxon>Ralstonia solanacearum species complex</taxon>
    </lineage>
</organism>
<sequence length="557" mass="58965">MPDNKRSQHITQGVARSPNRSMYYALGYKKEDFSNPMIGVANGHSTITPCNSGLQKLADAAVAAVKASNANPQIFGTPTISDGMSMGTEGMKYSLISREVIADCIETCAQGQWMDGVVVIGGCDKNMPGGMIALARTNVPGIYVYGGTIKPGNWKGKDLTIVSSFEAVGEFTAGRMSEEDFEGVERNACPTSGSCGGMYTANTMSSSFEALGMSLLYSSTMANPDQEKVDSAAESARVLVEAVRRDLKPRDIITRKSIENAVAVIMATGGSTNAVLHYLAIAHAAGVEWTIDDFERVRQRVPVICNLKPSGQYVATDLHKAGGIPQVMKILLNAGLLHGDCVTITGKTLAEELANVPDQPRADQDVILPIERALYQQGHLAILKGNLAEEGAVAKITGLKNPVISGPARVFDDEQSAMTAILADQIKAGDVLVLRYLGPKGGPGMPEMLAPTSAIIGKGLGESVGFVTDGRFSGGTWGMVVGHVAPEAFVGGTIALVQEGDSITIDAHQRLLQLNVPEDELARRRAAWKQPAPRYTRGVLAKFAQLTSTASKGAVTD</sequence>
<reference key="1">
    <citation type="journal article" date="2002" name="Nature">
        <title>Genome sequence of the plant pathogen Ralstonia solanacearum.</title>
        <authorList>
            <person name="Salanoubat M."/>
            <person name="Genin S."/>
            <person name="Artiguenave F."/>
            <person name="Gouzy J."/>
            <person name="Mangenot S."/>
            <person name="Arlat M."/>
            <person name="Billault A."/>
            <person name="Brottier P."/>
            <person name="Camus J.-C."/>
            <person name="Cattolico L."/>
            <person name="Chandler M."/>
            <person name="Choisne N."/>
            <person name="Claudel-Renard C."/>
            <person name="Cunnac S."/>
            <person name="Demange N."/>
            <person name="Gaspin C."/>
            <person name="Lavie M."/>
            <person name="Moisan A."/>
            <person name="Robert C."/>
            <person name="Saurin W."/>
            <person name="Schiex T."/>
            <person name="Siguier P."/>
            <person name="Thebault P."/>
            <person name="Whalen M."/>
            <person name="Wincker P."/>
            <person name="Levy M."/>
            <person name="Weissenbach J."/>
            <person name="Boucher C.A."/>
        </authorList>
    </citation>
    <scope>NUCLEOTIDE SEQUENCE [LARGE SCALE GENOMIC DNA]</scope>
    <source>
        <strain>ATCC BAA-1114 / GMI1000</strain>
    </source>
</reference>
<accession>Q8XWR1</accession>
<keyword id="KW-0001">2Fe-2S</keyword>
<keyword id="KW-0028">Amino-acid biosynthesis</keyword>
<keyword id="KW-0100">Branched-chain amino acid biosynthesis</keyword>
<keyword id="KW-0408">Iron</keyword>
<keyword id="KW-0411">Iron-sulfur</keyword>
<keyword id="KW-0456">Lyase</keyword>
<keyword id="KW-0460">Magnesium</keyword>
<keyword id="KW-0479">Metal-binding</keyword>
<keyword id="KW-1185">Reference proteome</keyword>
<proteinExistence type="inferred from homology"/>
<dbReference type="EC" id="4.2.1.9" evidence="1"/>
<dbReference type="EMBL" id="AL646052">
    <property type="protein sequence ID" value="CAD16119.1"/>
    <property type="molecule type" value="Genomic_DNA"/>
</dbReference>
<dbReference type="RefSeq" id="WP_011002332.1">
    <property type="nucleotide sequence ID" value="NC_003295.1"/>
</dbReference>
<dbReference type="SMR" id="Q8XWR1"/>
<dbReference type="STRING" id="267608.RSc2412"/>
<dbReference type="EnsemblBacteria" id="CAD16119">
    <property type="protein sequence ID" value="CAD16119"/>
    <property type="gene ID" value="RSc2412"/>
</dbReference>
<dbReference type="KEGG" id="rso:RSc2412"/>
<dbReference type="PATRIC" id="fig|267608.8.peg.2454"/>
<dbReference type="eggNOG" id="COG0129">
    <property type="taxonomic scope" value="Bacteria"/>
</dbReference>
<dbReference type="HOGENOM" id="CLU_014271_4_2_4"/>
<dbReference type="UniPathway" id="UPA00047">
    <property type="reaction ID" value="UER00057"/>
</dbReference>
<dbReference type="UniPathway" id="UPA00049">
    <property type="reaction ID" value="UER00061"/>
</dbReference>
<dbReference type="Proteomes" id="UP000001436">
    <property type="component" value="Chromosome"/>
</dbReference>
<dbReference type="GO" id="GO:0051537">
    <property type="term" value="F:2 iron, 2 sulfur cluster binding"/>
    <property type="evidence" value="ECO:0007669"/>
    <property type="project" value="UniProtKB-UniRule"/>
</dbReference>
<dbReference type="GO" id="GO:0004160">
    <property type="term" value="F:dihydroxy-acid dehydratase activity"/>
    <property type="evidence" value="ECO:0007669"/>
    <property type="project" value="UniProtKB-UniRule"/>
</dbReference>
<dbReference type="GO" id="GO:0000287">
    <property type="term" value="F:magnesium ion binding"/>
    <property type="evidence" value="ECO:0007669"/>
    <property type="project" value="UniProtKB-UniRule"/>
</dbReference>
<dbReference type="GO" id="GO:0009097">
    <property type="term" value="P:isoleucine biosynthetic process"/>
    <property type="evidence" value="ECO:0007669"/>
    <property type="project" value="UniProtKB-UniRule"/>
</dbReference>
<dbReference type="GO" id="GO:0009099">
    <property type="term" value="P:L-valine biosynthetic process"/>
    <property type="evidence" value="ECO:0007669"/>
    <property type="project" value="UniProtKB-UniRule"/>
</dbReference>
<dbReference type="FunFam" id="3.50.30.80:FF:000001">
    <property type="entry name" value="Dihydroxy-acid dehydratase"/>
    <property type="match status" value="1"/>
</dbReference>
<dbReference type="Gene3D" id="3.50.30.80">
    <property type="entry name" value="IlvD/EDD C-terminal domain-like"/>
    <property type="match status" value="1"/>
</dbReference>
<dbReference type="HAMAP" id="MF_00012">
    <property type="entry name" value="IlvD"/>
    <property type="match status" value="1"/>
</dbReference>
<dbReference type="InterPro" id="IPR050165">
    <property type="entry name" value="DHAD_IlvD/Edd"/>
</dbReference>
<dbReference type="InterPro" id="IPR042096">
    <property type="entry name" value="Dihydro-acid_dehy_C"/>
</dbReference>
<dbReference type="InterPro" id="IPR004404">
    <property type="entry name" value="DihydroxyA_deHydtase"/>
</dbReference>
<dbReference type="InterPro" id="IPR020558">
    <property type="entry name" value="DiOHA_6PGluconate_deHydtase_CS"/>
</dbReference>
<dbReference type="InterPro" id="IPR056740">
    <property type="entry name" value="ILV_EDD_C"/>
</dbReference>
<dbReference type="InterPro" id="IPR000581">
    <property type="entry name" value="ILV_EDD_N"/>
</dbReference>
<dbReference type="InterPro" id="IPR037237">
    <property type="entry name" value="IlvD/EDD_N"/>
</dbReference>
<dbReference type="NCBIfam" id="TIGR00110">
    <property type="entry name" value="ilvD"/>
    <property type="match status" value="1"/>
</dbReference>
<dbReference type="NCBIfam" id="NF002068">
    <property type="entry name" value="PRK00911.1"/>
    <property type="match status" value="1"/>
</dbReference>
<dbReference type="PANTHER" id="PTHR21000">
    <property type="entry name" value="DIHYDROXY-ACID DEHYDRATASE DAD"/>
    <property type="match status" value="1"/>
</dbReference>
<dbReference type="PANTHER" id="PTHR21000:SF5">
    <property type="entry name" value="DIHYDROXY-ACID DEHYDRATASE, MITOCHONDRIAL"/>
    <property type="match status" value="1"/>
</dbReference>
<dbReference type="Pfam" id="PF24877">
    <property type="entry name" value="ILV_EDD_C"/>
    <property type="match status" value="1"/>
</dbReference>
<dbReference type="Pfam" id="PF00920">
    <property type="entry name" value="ILVD_EDD_N"/>
    <property type="match status" value="1"/>
</dbReference>
<dbReference type="SUPFAM" id="SSF143975">
    <property type="entry name" value="IlvD/EDD N-terminal domain-like"/>
    <property type="match status" value="1"/>
</dbReference>
<dbReference type="SUPFAM" id="SSF52016">
    <property type="entry name" value="LeuD/IlvD-like"/>
    <property type="match status" value="1"/>
</dbReference>
<dbReference type="PROSITE" id="PS00886">
    <property type="entry name" value="ILVD_EDD_1"/>
    <property type="match status" value="1"/>
</dbReference>
<dbReference type="PROSITE" id="PS00887">
    <property type="entry name" value="ILVD_EDD_2"/>
    <property type="match status" value="1"/>
</dbReference>
<name>ILVD_RALN1</name>
<feature type="chain" id="PRO_0000103495" description="Dihydroxy-acid dehydratase">
    <location>
        <begin position="1"/>
        <end position="557"/>
    </location>
</feature>
<feature type="active site" description="Proton acceptor" evidence="1">
    <location>
        <position position="473"/>
    </location>
</feature>
<feature type="binding site" evidence="1">
    <location>
        <position position="50"/>
    </location>
    <ligand>
        <name>[2Fe-2S] cluster</name>
        <dbReference type="ChEBI" id="CHEBI:190135"/>
    </ligand>
</feature>
<feature type="binding site" evidence="1">
    <location>
        <position position="82"/>
    </location>
    <ligand>
        <name>Mg(2+)</name>
        <dbReference type="ChEBI" id="CHEBI:18420"/>
    </ligand>
</feature>
<feature type="binding site" evidence="1">
    <location>
        <position position="123"/>
    </location>
    <ligand>
        <name>[2Fe-2S] cluster</name>
        <dbReference type="ChEBI" id="CHEBI:190135"/>
    </ligand>
</feature>
<feature type="binding site" evidence="1">
    <location>
        <position position="124"/>
    </location>
    <ligand>
        <name>Mg(2+)</name>
        <dbReference type="ChEBI" id="CHEBI:18420"/>
    </ligand>
</feature>
<feature type="binding site" description="via carbamate group" evidence="1">
    <location>
        <position position="125"/>
    </location>
    <ligand>
        <name>Mg(2+)</name>
        <dbReference type="ChEBI" id="CHEBI:18420"/>
    </ligand>
</feature>
<feature type="binding site" evidence="1">
    <location>
        <position position="195"/>
    </location>
    <ligand>
        <name>[2Fe-2S] cluster</name>
        <dbReference type="ChEBI" id="CHEBI:190135"/>
    </ligand>
</feature>
<feature type="binding site" evidence="1">
    <location>
        <position position="447"/>
    </location>
    <ligand>
        <name>Mg(2+)</name>
        <dbReference type="ChEBI" id="CHEBI:18420"/>
    </ligand>
</feature>
<feature type="modified residue" description="N6-carboxylysine" evidence="1">
    <location>
        <position position="125"/>
    </location>
</feature>
<evidence type="ECO:0000255" key="1">
    <source>
        <dbReference type="HAMAP-Rule" id="MF_00012"/>
    </source>
</evidence>
<comment type="function">
    <text evidence="1">Functions in the biosynthesis of branched-chain amino acids. Catalyzes the dehydration of (2R,3R)-2,3-dihydroxy-3-methylpentanoate (2,3-dihydroxy-3-methylvalerate) into 2-oxo-3-methylpentanoate (2-oxo-3-methylvalerate) and of (2R)-2,3-dihydroxy-3-methylbutanoate (2,3-dihydroxyisovalerate) into 2-oxo-3-methylbutanoate (2-oxoisovalerate), the penultimate precursor to L-isoleucine and L-valine, respectively.</text>
</comment>
<comment type="catalytic activity">
    <reaction evidence="1">
        <text>(2R)-2,3-dihydroxy-3-methylbutanoate = 3-methyl-2-oxobutanoate + H2O</text>
        <dbReference type="Rhea" id="RHEA:24809"/>
        <dbReference type="ChEBI" id="CHEBI:11851"/>
        <dbReference type="ChEBI" id="CHEBI:15377"/>
        <dbReference type="ChEBI" id="CHEBI:49072"/>
        <dbReference type="EC" id="4.2.1.9"/>
    </reaction>
    <physiologicalReaction direction="left-to-right" evidence="1">
        <dbReference type="Rhea" id="RHEA:24810"/>
    </physiologicalReaction>
</comment>
<comment type="catalytic activity">
    <reaction evidence="1">
        <text>(2R,3R)-2,3-dihydroxy-3-methylpentanoate = (S)-3-methyl-2-oxopentanoate + H2O</text>
        <dbReference type="Rhea" id="RHEA:27694"/>
        <dbReference type="ChEBI" id="CHEBI:15377"/>
        <dbReference type="ChEBI" id="CHEBI:35146"/>
        <dbReference type="ChEBI" id="CHEBI:49258"/>
        <dbReference type="EC" id="4.2.1.9"/>
    </reaction>
    <physiologicalReaction direction="left-to-right" evidence="1">
        <dbReference type="Rhea" id="RHEA:27695"/>
    </physiologicalReaction>
</comment>
<comment type="cofactor">
    <cofactor evidence="1">
        <name>[2Fe-2S] cluster</name>
        <dbReference type="ChEBI" id="CHEBI:190135"/>
    </cofactor>
    <text evidence="1">Binds 1 [2Fe-2S] cluster per subunit. This cluster acts as a Lewis acid cofactor.</text>
</comment>
<comment type="cofactor">
    <cofactor evidence="1">
        <name>Mg(2+)</name>
        <dbReference type="ChEBI" id="CHEBI:18420"/>
    </cofactor>
</comment>
<comment type="pathway">
    <text evidence="1">Amino-acid biosynthesis; L-isoleucine biosynthesis; L-isoleucine from 2-oxobutanoate: step 3/4.</text>
</comment>
<comment type="pathway">
    <text evidence="1">Amino-acid biosynthesis; L-valine biosynthesis; L-valine from pyruvate: step 3/4.</text>
</comment>
<comment type="subunit">
    <text evidence="1">Homodimer.</text>
</comment>
<comment type="similarity">
    <text evidence="1">Belongs to the IlvD/Edd family.</text>
</comment>
<gene>
    <name evidence="1" type="primary">ilvD</name>
    <name type="ordered locus">RSc2412</name>
    <name type="ORF">RS02706</name>
</gene>
<protein>
    <recommendedName>
        <fullName evidence="1">Dihydroxy-acid dehydratase</fullName>
        <shortName evidence="1">DAD</shortName>
        <ecNumber evidence="1">4.2.1.9</ecNumber>
    </recommendedName>
</protein>